<sequence length="387" mass="44034">MSSIVPSMHNNRTIIIGIVAGEASGDILGAGLIRTLKKYLKKVRFFGIGGPCMQSEDMKSWYNIEELSVMGFAEIVMKLPRLLYIRRNLARRFINLKPDVFIGIDSPDFNISLENRLKKRGIRTIHYVSPSVWAWRKKRIFALKKATDNILVILPFEKKIYDHFNIPCQFIGHSLADQIPLNPNKVSARQKLGIPHDVYCLAVLPGSRIREIKMLAHDFLVCAKLLKNNFPNLEILVPLTNQTSIKKFISVASTSVKYRVLSNQSAWEIMMAADASLVTAGTATLECMLVKCPMVVAYRMHPLTFMLAKHFINIPWISLPNLLAGHELVKEFIQNNCRPENLAQTLINLLNNNNQHIVLKKKFRQLHHSIRCNADEQAAYAVLRLIK</sequence>
<feature type="chain" id="PRO_0000255161" description="Lipid-A-disaccharide synthase">
    <location>
        <begin position="1"/>
        <end position="387"/>
    </location>
</feature>
<reference key="1">
    <citation type="journal article" date="2005" name="Genome Res.">
        <title>Genome sequence of Blochmannia pennsylvanicus indicates parallel evolutionary trends among bacterial mutualists of insects.</title>
        <authorList>
            <person name="Degnan P.H."/>
            <person name="Lazarus A.B."/>
            <person name="Wernegreen J.J."/>
        </authorList>
    </citation>
    <scope>NUCLEOTIDE SEQUENCE [LARGE SCALE GENOMIC DNA]</scope>
    <source>
        <strain>BPEN</strain>
    </source>
</reference>
<protein>
    <recommendedName>
        <fullName evidence="1">Lipid-A-disaccharide synthase</fullName>
        <ecNumber evidence="1">2.4.1.182</ecNumber>
    </recommendedName>
</protein>
<keyword id="KW-0328">Glycosyltransferase</keyword>
<keyword id="KW-0441">Lipid A biosynthesis</keyword>
<keyword id="KW-0444">Lipid biosynthesis</keyword>
<keyword id="KW-0443">Lipid metabolism</keyword>
<keyword id="KW-1185">Reference proteome</keyword>
<keyword id="KW-0808">Transferase</keyword>
<accession>Q493B9</accession>
<dbReference type="EC" id="2.4.1.182" evidence="1"/>
<dbReference type="EMBL" id="CP000016">
    <property type="protein sequence ID" value="AAZ40923.1"/>
    <property type="molecule type" value="Genomic_DNA"/>
</dbReference>
<dbReference type="SMR" id="Q493B9"/>
<dbReference type="STRING" id="291272.BPEN_292"/>
<dbReference type="CAZy" id="GT19">
    <property type="family name" value="Glycosyltransferase Family 19"/>
</dbReference>
<dbReference type="KEGG" id="bpn:BPEN_292"/>
<dbReference type="eggNOG" id="COG0763">
    <property type="taxonomic scope" value="Bacteria"/>
</dbReference>
<dbReference type="HOGENOM" id="CLU_036577_3_0_6"/>
<dbReference type="OrthoDB" id="9801642at2"/>
<dbReference type="UniPathway" id="UPA00359">
    <property type="reaction ID" value="UER00481"/>
</dbReference>
<dbReference type="Proteomes" id="UP000007794">
    <property type="component" value="Chromosome"/>
</dbReference>
<dbReference type="GO" id="GO:0016020">
    <property type="term" value="C:membrane"/>
    <property type="evidence" value="ECO:0007669"/>
    <property type="project" value="GOC"/>
</dbReference>
<dbReference type="GO" id="GO:0008915">
    <property type="term" value="F:lipid-A-disaccharide synthase activity"/>
    <property type="evidence" value="ECO:0007669"/>
    <property type="project" value="UniProtKB-UniRule"/>
</dbReference>
<dbReference type="GO" id="GO:0005543">
    <property type="term" value="F:phospholipid binding"/>
    <property type="evidence" value="ECO:0007669"/>
    <property type="project" value="TreeGrafter"/>
</dbReference>
<dbReference type="GO" id="GO:0009245">
    <property type="term" value="P:lipid A biosynthetic process"/>
    <property type="evidence" value="ECO:0007669"/>
    <property type="project" value="UniProtKB-UniRule"/>
</dbReference>
<dbReference type="HAMAP" id="MF_00392">
    <property type="entry name" value="LpxB"/>
    <property type="match status" value="1"/>
</dbReference>
<dbReference type="InterPro" id="IPR003835">
    <property type="entry name" value="Glyco_trans_19"/>
</dbReference>
<dbReference type="NCBIfam" id="TIGR00215">
    <property type="entry name" value="lpxB"/>
    <property type="match status" value="1"/>
</dbReference>
<dbReference type="PANTHER" id="PTHR30372">
    <property type="entry name" value="LIPID-A-DISACCHARIDE SYNTHASE"/>
    <property type="match status" value="1"/>
</dbReference>
<dbReference type="PANTHER" id="PTHR30372:SF4">
    <property type="entry name" value="LIPID-A-DISACCHARIDE SYNTHASE, MITOCHONDRIAL-RELATED"/>
    <property type="match status" value="1"/>
</dbReference>
<dbReference type="Pfam" id="PF02684">
    <property type="entry name" value="LpxB"/>
    <property type="match status" value="1"/>
</dbReference>
<dbReference type="SUPFAM" id="SSF53756">
    <property type="entry name" value="UDP-Glycosyltransferase/glycogen phosphorylase"/>
    <property type="match status" value="1"/>
</dbReference>
<proteinExistence type="inferred from homology"/>
<organism>
    <name type="scientific">Blochmanniella pennsylvanica (strain BPEN)</name>
    <dbReference type="NCBI Taxonomy" id="291272"/>
    <lineage>
        <taxon>Bacteria</taxon>
        <taxon>Pseudomonadati</taxon>
        <taxon>Pseudomonadota</taxon>
        <taxon>Gammaproteobacteria</taxon>
        <taxon>Enterobacterales</taxon>
        <taxon>Enterobacteriaceae</taxon>
        <taxon>ant endosymbionts</taxon>
        <taxon>Candidatus Blochmanniella</taxon>
    </lineage>
</organism>
<name>LPXB_BLOPB</name>
<evidence type="ECO:0000255" key="1">
    <source>
        <dbReference type="HAMAP-Rule" id="MF_00392"/>
    </source>
</evidence>
<gene>
    <name evidence="1" type="primary">lpxB</name>
    <name type="ordered locus">BPEN_292</name>
</gene>
<comment type="function">
    <text evidence="1">Condensation of UDP-2,3-diacylglucosamine and 2,3-diacylglucosamine-1-phosphate to form lipid A disaccharide, a precursor of lipid A, a phosphorylated glycolipid that anchors the lipopolysaccharide to the outer membrane of the cell.</text>
</comment>
<comment type="catalytic activity">
    <reaction evidence="1">
        <text>2-N,3-O-bis[(3R)-3-hydroxytetradecanoyl]-alpha-D-glucosaminyl 1-phosphate + UDP-2-N,3-O-bis[(3R)-3-hydroxytetradecanoyl]-alpha-D-glucosamine = lipid A disaccharide (E. coli) + UDP + H(+)</text>
        <dbReference type="Rhea" id="RHEA:22668"/>
        <dbReference type="ChEBI" id="CHEBI:15378"/>
        <dbReference type="ChEBI" id="CHEBI:57957"/>
        <dbReference type="ChEBI" id="CHEBI:58223"/>
        <dbReference type="ChEBI" id="CHEBI:58466"/>
        <dbReference type="ChEBI" id="CHEBI:78847"/>
    </reaction>
</comment>
<comment type="catalytic activity">
    <reaction evidence="1">
        <text>a lipid X + a UDP-2-N,3-O-bis[(3R)-3-hydroxyacyl]-alpha-D-glucosamine = a lipid A disaccharide + UDP + H(+)</text>
        <dbReference type="Rhea" id="RHEA:67828"/>
        <dbReference type="ChEBI" id="CHEBI:15378"/>
        <dbReference type="ChEBI" id="CHEBI:58223"/>
        <dbReference type="ChEBI" id="CHEBI:137748"/>
        <dbReference type="ChEBI" id="CHEBI:176338"/>
        <dbReference type="ChEBI" id="CHEBI:176343"/>
        <dbReference type="EC" id="2.4.1.182"/>
    </reaction>
</comment>
<comment type="pathway">
    <text evidence="1">Glycolipid biosynthesis; lipid IV(A) biosynthesis; lipid IV(A) from (3R)-3-hydroxytetradecanoyl-[acyl-carrier-protein] and UDP-N-acetyl-alpha-D-glucosamine: step 5/6.</text>
</comment>
<comment type="similarity">
    <text evidence="1">Belongs to the LpxB family.</text>
</comment>